<evidence type="ECO:0000250" key="1"/>
<evidence type="ECO:0000255" key="2">
    <source>
        <dbReference type="PROSITE-ProRule" id="PRU10001"/>
    </source>
</evidence>
<evidence type="ECO:0000305" key="3"/>
<dbReference type="EC" id="1.-.-.-"/>
<dbReference type="EMBL" id="AL123456">
    <property type="protein sequence ID" value="CCP44847.1"/>
    <property type="molecule type" value="Genomic_DNA"/>
</dbReference>
<dbReference type="PIR" id="D70765">
    <property type="entry name" value="D70765"/>
</dbReference>
<dbReference type="RefSeq" id="NP_216589.1">
    <property type="nucleotide sequence ID" value="NC_000962.3"/>
</dbReference>
<dbReference type="RefSeq" id="WP_003900457.1">
    <property type="nucleotide sequence ID" value="NZ_NVQJ01000047.1"/>
</dbReference>
<dbReference type="SMR" id="P9WGR3"/>
<dbReference type="FunCoup" id="P9WGR3">
    <property type="interactions" value="1"/>
</dbReference>
<dbReference type="STRING" id="83332.Rv2073c"/>
<dbReference type="PaxDb" id="83332-Rv2073c"/>
<dbReference type="DNASU" id="887267"/>
<dbReference type="GeneID" id="887267"/>
<dbReference type="KEGG" id="mtu:Rv2073c"/>
<dbReference type="KEGG" id="mtv:RVBD_2073c"/>
<dbReference type="TubercuList" id="Rv2073c"/>
<dbReference type="eggNOG" id="COG0300">
    <property type="taxonomic scope" value="Bacteria"/>
</dbReference>
<dbReference type="InParanoid" id="P9WGR3"/>
<dbReference type="OrthoDB" id="5115951at2"/>
<dbReference type="PhylomeDB" id="P9WGR3"/>
<dbReference type="Proteomes" id="UP000001584">
    <property type="component" value="Chromosome"/>
</dbReference>
<dbReference type="GO" id="GO:0016491">
    <property type="term" value="F:oxidoreductase activity"/>
    <property type="evidence" value="ECO:0007669"/>
    <property type="project" value="UniProtKB-KW"/>
</dbReference>
<dbReference type="Gene3D" id="3.40.50.720">
    <property type="entry name" value="NAD(P)-binding Rossmann-like Domain"/>
    <property type="match status" value="1"/>
</dbReference>
<dbReference type="InterPro" id="IPR036291">
    <property type="entry name" value="NAD(P)-bd_dom_sf"/>
</dbReference>
<dbReference type="InterPro" id="IPR020904">
    <property type="entry name" value="Sc_DH/Rdtase_CS"/>
</dbReference>
<dbReference type="InterPro" id="IPR002347">
    <property type="entry name" value="SDR_fam"/>
</dbReference>
<dbReference type="PANTHER" id="PTHR43669">
    <property type="entry name" value="5-KETO-D-GLUCONATE 5-REDUCTASE"/>
    <property type="match status" value="1"/>
</dbReference>
<dbReference type="PANTHER" id="PTHR43669:SF6">
    <property type="entry name" value="DECAPRENYLPHOSPHORYL-2-KETO-BETA-D-ERYTHRO-PENTOSE REDUCTASE"/>
    <property type="match status" value="1"/>
</dbReference>
<dbReference type="Pfam" id="PF00106">
    <property type="entry name" value="adh_short"/>
    <property type="match status" value="1"/>
</dbReference>
<dbReference type="PRINTS" id="PR00081">
    <property type="entry name" value="GDHRDH"/>
</dbReference>
<dbReference type="SUPFAM" id="SSF51735">
    <property type="entry name" value="NAD(P)-binding Rossmann-fold domains"/>
    <property type="match status" value="1"/>
</dbReference>
<dbReference type="PROSITE" id="PS00061">
    <property type="entry name" value="ADH_SHORT"/>
    <property type="match status" value="1"/>
</dbReference>
<comment type="similarity">
    <text evidence="3">Belongs to the short-chain dehydrogenases/reductases (SDR) family.</text>
</comment>
<protein>
    <recommendedName>
        <fullName>Uncharacterized oxidoreductase Rv2073c</fullName>
        <ecNumber>1.-.-.-</ecNumber>
    </recommendedName>
</protein>
<sequence>MDDTGAAPVVIFGGRSQIGGELARRLAAGATMVLAARNADQLADQAAALRAAGAIAVHTREFDADDLAAHGPLVASLVAEHGPIGTAVLAFGILGDQARAETDAAHAVAIVHTDYVAQVSLLTHLAAAMRTAGRGSLVVFSSVAGIRVRRANYVYGSAKAGLDGFASGLADALHGTGVRLLIARPGFVIGRMTEGMTPAPLSVTPERVAAATARALVNGKRVVWIPWALRPMFVALRLLPRFVWRRMPR</sequence>
<name>Y2073_MYCTU</name>
<keyword id="KW-0560">Oxidoreductase</keyword>
<keyword id="KW-1185">Reference proteome</keyword>
<feature type="chain" id="PRO_0000054864" description="Uncharacterized oxidoreductase Rv2073c">
    <location>
        <begin position="1"/>
        <end position="249"/>
    </location>
</feature>
<feature type="active site" description="Proton acceptor" evidence="2">
    <location>
        <position position="155"/>
    </location>
</feature>
<feature type="binding site" evidence="1">
    <location>
        <begin position="11"/>
        <end position="34"/>
    </location>
    <ligand>
        <name>NADP(+)</name>
        <dbReference type="ChEBI" id="CHEBI:58349"/>
    </ligand>
</feature>
<feature type="binding site" evidence="1">
    <location>
        <position position="142"/>
    </location>
    <ligand>
        <name>substrate</name>
    </ligand>
</feature>
<organism>
    <name type="scientific">Mycobacterium tuberculosis (strain ATCC 25618 / H37Rv)</name>
    <dbReference type="NCBI Taxonomy" id="83332"/>
    <lineage>
        <taxon>Bacteria</taxon>
        <taxon>Bacillati</taxon>
        <taxon>Actinomycetota</taxon>
        <taxon>Actinomycetes</taxon>
        <taxon>Mycobacteriales</taxon>
        <taxon>Mycobacteriaceae</taxon>
        <taxon>Mycobacterium</taxon>
        <taxon>Mycobacterium tuberculosis complex</taxon>
    </lineage>
</organism>
<accession>P9WGR3</accession>
<accession>L0T8J4</accession>
<accession>Q10681</accession>
<reference key="1">
    <citation type="journal article" date="1998" name="Nature">
        <title>Deciphering the biology of Mycobacterium tuberculosis from the complete genome sequence.</title>
        <authorList>
            <person name="Cole S.T."/>
            <person name="Brosch R."/>
            <person name="Parkhill J."/>
            <person name="Garnier T."/>
            <person name="Churcher C.M."/>
            <person name="Harris D.E."/>
            <person name="Gordon S.V."/>
            <person name="Eiglmeier K."/>
            <person name="Gas S."/>
            <person name="Barry C.E. III"/>
            <person name="Tekaia F."/>
            <person name="Badcock K."/>
            <person name="Basham D."/>
            <person name="Brown D."/>
            <person name="Chillingworth T."/>
            <person name="Connor R."/>
            <person name="Davies R.M."/>
            <person name="Devlin K."/>
            <person name="Feltwell T."/>
            <person name="Gentles S."/>
            <person name="Hamlin N."/>
            <person name="Holroyd S."/>
            <person name="Hornsby T."/>
            <person name="Jagels K."/>
            <person name="Krogh A."/>
            <person name="McLean J."/>
            <person name="Moule S."/>
            <person name="Murphy L.D."/>
            <person name="Oliver S."/>
            <person name="Osborne J."/>
            <person name="Quail M.A."/>
            <person name="Rajandream M.A."/>
            <person name="Rogers J."/>
            <person name="Rutter S."/>
            <person name="Seeger K."/>
            <person name="Skelton S."/>
            <person name="Squares S."/>
            <person name="Squares R."/>
            <person name="Sulston J.E."/>
            <person name="Taylor K."/>
            <person name="Whitehead S."/>
            <person name="Barrell B.G."/>
        </authorList>
    </citation>
    <scope>NUCLEOTIDE SEQUENCE [LARGE SCALE GENOMIC DNA]</scope>
    <source>
        <strain>ATCC 25618 / H37Rv</strain>
    </source>
</reference>
<reference key="2">
    <citation type="journal article" date="2011" name="Mol. Cell. Proteomics">
        <title>Proteogenomic analysis of Mycobacterium tuberculosis by high resolution mass spectrometry.</title>
        <authorList>
            <person name="Kelkar D.S."/>
            <person name="Kumar D."/>
            <person name="Kumar P."/>
            <person name="Balakrishnan L."/>
            <person name="Muthusamy B."/>
            <person name="Yadav A.K."/>
            <person name="Shrivastava P."/>
            <person name="Marimuthu A."/>
            <person name="Anand S."/>
            <person name="Sundaram H."/>
            <person name="Kingsbury R."/>
            <person name="Harsha H.C."/>
            <person name="Nair B."/>
            <person name="Prasad T.S."/>
            <person name="Chauhan D.S."/>
            <person name="Katoch K."/>
            <person name="Katoch V.M."/>
            <person name="Kumar P."/>
            <person name="Chaerkady R."/>
            <person name="Ramachandran S."/>
            <person name="Dash D."/>
            <person name="Pandey A."/>
        </authorList>
    </citation>
    <scope>IDENTIFICATION BY MASS SPECTROMETRY [LARGE SCALE ANALYSIS]</scope>
    <source>
        <strain>ATCC 25618 / H37Rv</strain>
    </source>
</reference>
<proteinExistence type="evidence at protein level"/>
<gene>
    <name type="ordered locus">Rv2073c</name>
    <name type="ORF">MTCY49.12c</name>
</gene>